<accession>Q94IR2</accession>
<feature type="chain" id="PRO_0000285988" description="Carotenoid 9,10(9',10')-cleavage dioxygenase 1">
    <location>
        <begin position="1"/>
        <end position="543"/>
    </location>
</feature>
<feature type="binding site" evidence="1">
    <location>
        <position position="224"/>
    </location>
    <ligand>
        <name>Fe cation</name>
        <dbReference type="ChEBI" id="CHEBI:24875"/>
        <note>catalytic</note>
    </ligand>
</feature>
<feature type="binding site" evidence="1">
    <location>
        <position position="272"/>
    </location>
    <ligand>
        <name>Fe cation</name>
        <dbReference type="ChEBI" id="CHEBI:24875"/>
        <note>catalytic</note>
    </ligand>
</feature>
<feature type="binding site" evidence="1">
    <location>
        <position position="338"/>
    </location>
    <ligand>
        <name>Fe cation</name>
        <dbReference type="ChEBI" id="CHEBI:24875"/>
        <note>catalytic</note>
    </ligand>
</feature>
<feature type="binding site" evidence="1">
    <location>
        <position position="528"/>
    </location>
    <ligand>
        <name>Fe cation</name>
        <dbReference type="ChEBI" id="CHEBI:24875"/>
        <note>catalytic</note>
    </ligand>
</feature>
<keyword id="KW-0223">Dioxygenase</keyword>
<keyword id="KW-0408">Iron</keyword>
<keyword id="KW-0479">Metal-binding</keyword>
<keyword id="KW-0560">Oxidoreductase</keyword>
<proteinExistence type="evidence at protein level"/>
<dbReference type="EC" id="1.14.99.n4"/>
<dbReference type="EMBL" id="AY029525">
    <property type="protein sequence ID" value="AAK38744.1"/>
    <property type="molecule type" value="mRNA"/>
</dbReference>
<dbReference type="SMR" id="Q94IR2"/>
<dbReference type="eggNOG" id="KOG1285">
    <property type="taxonomic scope" value="Eukaryota"/>
</dbReference>
<dbReference type="GO" id="GO:0009570">
    <property type="term" value="C:chloroplast stroma"/>
    <property type="evidence" value="ECO:0007669"/>
    <property type="project" value="TreeGrafter"/>
</dbReference>
<dbReference type="GO" id="GO:0010436">
    <property type="term" value="F:carotenoid dioxygenase activity"/>
    <property type="evidence" value="ECO:0007669"/>
    <property type="project" value="TreeGrafter"/>
</dbReference>
<dbReference type="GO" id="GO:0046872">
    <property type="term" value="F:metal ion binding"/>
    <property type="evidence" value="ECO:0007669"/>
    <property type="project" value="UniProtKB-KW"/>
</dbReference>
<dbReference type="GO" id="GO:0016121">
    <property type="term" value="P:carotene catabolic process"/>
    <property type="evidence" value="ECO:0007669"/>
    <property type="project" value="TreeGrafter"/>
</dbReference>
<dbReference type="InterPro" id="IPR004294">
    <property type="entry name" value="Carotenoid_Oase"/>
</dbReference>
<dbReference type="PANTHER" id="PTHR10543">
    <property type="entry name" value="BETA-CAROTENE DIOXYGENASE"/>
    <property type="match status" value="1"/>
</dbReference>
<dbReference type="PANTHER" id="PTHR10543:SF89">
    <property type="entry name" value="CAROTENOID 9,10(9',10')-CLEAVAGE DIOXYGENASE 1"/>
    <property type="match status" value="1"/>
</dbReference>
<dbReference type="Pfam" id="PF03055">
    <property type="entry name" value="RPE65"/>
    <property type="match status" value="1"/>
</dbReference>
<gene>
    <name type="primary">CCD1</name>
    <name type="synonym">NCED2</name>
</gene>
<comment type="function">
    <text evidence="3">Cleaves a variety of carotenoids at the 9-10 and 9'-10' double bonds. Probably not involved in abscisic acid biosynthesis.</text>
</comment>
<comment type="catalytic activity">
    <reaction evidence="3">
        <text>all-trans-zeaxanthin + 2 O2 = 4,9-dimethyldodeca-2,4,6,8,10-pentaenedial + 2 (3R)-hydroxy-beta-ionone</text>
        <dbReference type="Rhea" id="RHEA:26393"/>
        <dbReference type="ChEBI" id="CHEBI:15379"/>
        <dbReference type="ChEBI" id="CHEBI:27547"/>
        <dbReference type="ChEBI" id="CHEBI:53171"/>
        <dbReference type="ChEBI" id="CHEBI:53173"/>
        <dbReference type="EC" id="1.14.99.n4"/>
    </reaction>
</comment>
<comment type="cofactor">
    <cofactor evidence="1">
        <name>Fe(2+)</name>
        <dbReference type="ChEBI" id="CHEBI:29033"/>
    </cofactor>
    <text evidence="1">Binds 1 Fe(2+) ion per subunit.</text>
</comment>
<comment type="subunit">
    <text evidence="5">Homodimer.</text>
</comment>
<comment type="induction">
    <text evidence="2">Constitutively expressed in embryos.</text>
</comment>
<comment type="similarity">
    <text evidence="4">Belongs to the carotenoid oxygenase family.</text>
</comment>
<protein>
    <recommendedName>
        <fullName>Carotenoid 9,10(9',10')-cleavage dioxygenase 1</fullName>
        <ecNumber>1.14.99.n4</ecNumber>
    </recommendedName>
    <alternativeName>
        <fullName>Neoxanthin cleavage enzyme NC2</fullName>
    </alternativeName>
    <alternativeName>
        <fullName>PvCCD1</fullName>
    </alternativeName>
    <alternativeName>
        <fullName>PvNCED2</fullName>
    </alternativeName>
</protein>
<organism>
    <name type="scientific">Phaseolus vulgaris</name>
    <name type="common">Kidney bean</name>
    <name type="synonym">French bean</name>
    <dbReference type="NCBI Taxonomy" id="3885"/>
    <lineage>
        <taxon>Eukaryota</taxon>
        <taxon>Viridiplantae</taxon>
        <taxon>Streptophyta</taxon>
        <taxon>Embryophyta</taxon>
        <taxon>Tracheophyta</taxon>
        <taxon>Spermatophyta</taxon>
        <taxon>Magnoliopsida</taxon>
        <taxon>eudicotyledons</taxon>
        <taxon>Gunneridae</taxon>
        <taxon>Pentapetalae</taxon>
        <taxon>rosids</taxon>
        <taxon>fabids</taxon>
        <taxon>Fabales</taxon>
        <taxon>Fabaceae</taxon>
        <taxon>Papilionoideae</taxon>
        <taxon>50 kb inversion clade</taxon>
        <taxon>NPAAA clade</taxon>
        <taxon>indigoferoid/millettioid clade</taxon>
        <taxon>Phaseoleae</taxon>
        <taxon>Phaseolus</taxon>
    </lineage>
</organism>
<sequence length="543" mass="61100">MGDDGKKNGAEGGLVKVDPKPTNGFSSKVIDLLEKLLVKFLYDSSLPHHYLTGNFGPVTETPPTKDLPVKGHLPDCLNGEFVRVGPNPKFAPVAGYHWFDGDGMIHGLRIKDGKATYVSRFVETSRLKQEEYFGRSKFMKIGDLKGLFGLLMVNIHMLRTKLKVLDLSYGGGTTNTALVYHHGKLLALSEADKPYAIKVFEDGDLQTLGMLDYDKRLGHSFTAHPKVDPFTGEMFSFGYAHTPPYITYRVISKDGYMHDPVPITISDPIMMHDFAITENYAVFMDLPLIFRPKEMVKNKTLIFSFDSTKKARFGVLPRYAKDEQHIRWFELPNCFIFHNANAWEEEDEVVLITCRLQNPKLDNVGGTVQEKLENFSNELYEMRFNMKTGEASQKKLSASTVDFPRVNENYTGRKQRYVYGTTLDSIAKVTGIIKFDLHAEPDHGKEKLEVGGNVQGLYDLGPGKFGSEAVYIPRVPGIESEEDDGYLVLFVHDENAGKSFVHVIDAKTMSADPVAVVELPNRVPYGFHAFFVTEEQLQEQAKL</sequence>
<evidence type="ECO:0000250" key="1"/>
<evidence type="ECO:0000269" key="2">
    <source>
    </source>
</evidence>
<evidence type="ECO:0000269" key="3">
    <source>
    </source>
</evidence>
<evidence type="ECO:0000305" key="4"/>
<evidence type="ECO:0000305" key="5">
    <source>
    </source>
</evidence>
<reference key="1">
    <citation type="journal article" date="2001" name="J. Biol. Chem.">
        <title>Characterization of a novel carotenoid cleavage dioxygenase from plants.</title>
        <authorList>
            <person name="Schwartz S.H."/>
            <person name="Qin X."/>
            <person name="Zeevaart J.A."/>
        </authorList>
    </citation>
    <scope>NUCLEOTIDE SEQUENCE [MRNA]</scope>
    <scope>FUNCTION</scope>
    <scope>CATALYTIC ACTIVITY</scope>
    <scope>SUBUNIT</scope>
</reference>
<reference key="2">
    <citation type="journal article" date="1999" name="Proc. Natl. Acad. Sci. U.S.A.">
        <title>The 9-cis-epoxycarotenoid cleavage reaction is the key regulatory step of abscisic acid biosynthesis in water-stressed bean.</title>
        <authorList>
            <person name="Qin X."/>
            <person name="Zeevaart J.A."/>
        </authorList>
    </citation>
    <scope>INDUCTION</scope>
</reference>
<name>CCD1_PHAVU</name>